<sequence>MAFAKISQVAHYVPEQVVTNHDLAQIMDTNDEWISSRTGIRQRHISRTESTSDLATEVAKKLMAKAGITGEELDFIILATITPDSMMPSTAARVQANIGANKAFAFDLTAACSGFVFALSTAEKFIASGRFQKGLVIGSETLSKAVDWSDRSTAVLFGDGAGGVLLEASEQEHFLAESLNSDGSRSECLTYGHSGLHSPFSDQESADSFLKMDGRTVFDFAIRDVAKSIKQTIDESPIEVTDLDYLLLHQANDRILDKMARKIGVDRAKLPANMMEYGNTSAASIPILLSECVEQGLIPLDGSQTVLLSGFGGGLTWGTLILTI</sequence>
<evidence type="ECO:0000255" key="1">
    <source>
        <dbReference type="HAMAP-Rule" id="MF_01815"/>
    </source>
</evidence>
<feature type="chain" id="PRO_1000187901" description="Beta-ketoacyl-[acyl-carrier-protein] synthase III">
    <location>
        <begin position="1"/>
        <end position="324"/>
    </location>
</feature>
<feature type="region of interest" description="ACP-binding" evidence="1">
    <location>
        <begin position="250"/>
        <end position="254"/>
    </location>
</feature>
<feature type="active site" evidence="1">
    <location>
        <position position="112"/>
    </location>
</feature>
<feature type="active site" evidence="1">
    <location>
        <position position="249"/>
    </location>
</feature>
<feature type="active site" evidence="1">
    <location>
        <position position="279"/>
    </location>
</feature>
<keyword id="KW-0012">Acyltransferase</keyword>
<keyword id="KW-0963">Cytoplasm</keyword>
<keyword id="KW-0275">Fatty acid biosynthesis</keyword>
<keyword id="KW-0276">Fatty acid metabolism</keyword>
<keyword id="KW-0444">Lipid biosynthesis</keyword>
<keyword id="KW-0443">Lipid metabolism</keyword>
<keyword id="KW-0511">Multifunctional enzyme</keyword>
<keyword id="KW-0808">Transferase</keyword>
<proteinExistence type="inferred from homology"/>
<gene>
    <name evidence="1" type="primary">fabH</name>
    <name type="ordered locus">SPN23F03920</name>
</gene>
<protein>
    <recommendedName>
        <fullName evidence="1">Beta-ketoacyl-[acyl-carrier-protein] synthase III</fullName>
        <shortName evidence="1">Beta-ketoacyl-ACP synthase III</shortName>
        <shortName evidence="1">KAS III</shortName>
        <ecNumber evidence="1">2.3.1.180</ecNumber>
    </recommendedName>
    <alternativeName>
        <fullName evidence="1">3-oxoacyl-[acyl-carrier-protein] synthase 3</fullName>
    </alternativeName>
    <alternativeName>
        <fullName evidence="1">3-oxoacyl-[acyl-carrier-protein] synthase III</fullName>
    </alternativeName>
</protein>
<dbReference type="EC" id="2.3.1.180" evidence="1"/>
<dbReference type="EMBL" id="FM211187">
    <property type="protein sequence ID" value="CAR68241.1"/>
    <property type="molecule type" value="Genomic_DNA"/>
</dbReference>
<dbReference type="RefSeq" id="WP_000852948.1">
    <property type="nucleotide sequence ID" value="NC_011900.1"/>
</dbReference>
<dbReference type="SMR" id="B8ZLI3"/>
<dbReference type="KEGG" id="sne:SPN23F03920"/>
<dbReference type="HOGENOM" id="CLU_039592_4_1_9"/>
<dbReference type="UniPathway" id="UPA00094"/>
<dbReference type="GO" id="GO:0005737">
    <property type="term" value="C:cytoplasm"/>
    <property type="evidence" value="ECO:0007669"/>
    <property type="project" value="UniProtKB-SubCell"/>
</dbReference>
<dbReference type="GO" id="GO:0004315">
    <property type="term" value="F:3-oxoacyl-[acyl-carrier-protein] synthase activity"/>
    <property type="evidence" value="ECO:0007669"/>
    <property type="project" value="InterPro"/>
</dbReference>
<dbReference type="GO" id="GO:0033818">
    <property type="term" value="F:beta-ketoacyl-acyl-carrier-protein synthase III activity"/>
    <property type="evidence" value="ECO:0007669"/>
    <property type="project" value="UniProtKB-UniRule"/>
</dbReference>
<dbReference type="GO" id="GO:0006633">
    <property type="term" value="P:fatty acid biosynthetic process"/>
    <property type="evidence" value="ECO:0007669"/>
    <property type="project" value="UniProtKB-UniRule"/>
</dbReference>
<dbReference type="CDD" id="cd00830">
    <property type="entry name" value="KAS_III"/>
    <property type="match status" value="1"/>
</dbReference>
<dbReference type="Gene3D" id="3.40.47.10">
    <property type="match status" value="1"/>
</dbReference>
<dbReference type="HAMAP" id="MF_01815">
    <property type="entry name" value="FabH"/>
    <property type="match status" value="1"/>
</dbReference>
<dbReference type="InterPro" id="IPR013747">
    <property type="entry name" value="ACP_syn_III_C"/>
</dbReference>
<dbReference type="InterPro" id="IPR013751">
    <property type="entry name" value="ACP_syn_III_N"/>
</dbReference>
<dbReference type="InterPro" id="IPR004655">
    <property type="entry name" value="FabH"/>
</dbReference>
<dbReference type="InterPro" id="IPR016039">
    <property type="entry name" value="Thiolase-like"/>
</dbReference>
<dbReference type="NCBIfam" id="TIGR00747">
    <property type="entry name" value="fabH"/>
    <property type="match status" value="1"/>
</dbReference>
<dbReference type="NCBIfam" id="NF006829">
    <property type="entry name" value="PRK09352.1"/>
    <property type="match status" value="1"/>
</dbReference>
<dbReference type="PANTHER" id="PTHR43091">
    <property type="entry name" value="3-OXOACYL-[ACYL-CARRIER-PROTEIN] SYNTHASE"/>
    <property type="match status" value="1"/>
</dbReference>
<dbReference type="PANTHER" id="PTHR43091:SF1">
    <property type="entry name" value="BETA-KETOACYL-[ACYL-CARRIER-PROTEIN] SYNTHASE III, CHLOROPLASTIC"/>
    <property type="match status" value="1"/>
</dbReference>
<dbReference type="Pfam" id="PF08545">
    <property type="entry name" value="ACP_syn_III"/>
    <property type="match status" value="1"/>
</dbReference>
<dbReference type="Pfam" id="PF08541">
    <property type="entry name" value="ACP_syn_III_C"/>
    <property type="match status" value="1"/>
</dbReference>
<dbReference type="SUPFAM" id="SSF53901">
    <property type="entry name" value="Thiolase-like"/>
    <property type="match status" value="1"/>
</dbReference>
<name>FABH_STRPJ</name>
<accession>B8ZLI3</accession>
<reference key="1">
    <citation type="journal article" date="2009" name="J. Bacteriol.">
        <title>Role of conjugative elements in the evolution of the multidrug-resistant pandemic clone Streptococcus pneumoniae Spain23F ST81.</title>
        <authorList>
            <person name="Croucher N.J."/>
            <person name="Walker D."/>
            <person name="Romero P."/>
            <person name="Lennard N."/>
            <person name="Paterson G.K."/>
            <person name="Bason N.C."/>
            <person name="Mitchell A.M."/>
            <person name="Quail M.A."/>
            <person name="Andrew P.W."/>
            <person name="Parkhill J."/>
            <person name="Bentley S.D."/>
            <person name="Mitchell T.J."/>
        </authorList>
    </citation>
    <scope>NUCLEOTIDE SEQUENCE [LARGE SCALE GENOMIC DNA]</scope>
    <source>
        <strain>ATCC 700669 / Spain 23F-1</strain>
    </source>
</reference>
<organism>
    <name type="scientific">Streptococcus pneumoniae (strain ATCC 700669 / Spain 23F-1)</name>
    <dbReference type="NCBI Taxonomy" id="561276"/>
    <lineage>
        <taxon>Bacteria</taxon>
        <taxon>Bacillati</taxon>
        <taxon>Bacillota</taxon>
        <taxon>Bacilli</taxon>
        <taxon>Lactobacillales</taxon>
        <taxon>Streptococcaceae</taxon>
        <taxon>Streptococcus</taxon>
    </lineage>
</organism>
<comment type="function">
    <text evidence="1">Catalyzes the condensation reaction of fatty acid synthesis by the addition to an acyl acceptor of two carbons from malonyl-ACP. Catalyzes the first condensation reaction which initiates fatty acid synthesis and may therefore play a role in governing the total rate of fatty acid production. Possesses both acetoacetyl-ACP synthase and acetyl transacylase activities. Its substrate specificity determines the biosynthesis of branched-chain and/or straight-chain of fatty acids.</text>
</comment>
<comment type="catalytic activity">
    <reaction evidence="1">
        <text>malonyl-[ACP] + acetyl-CoA + H(+) = 3-oxobutanoyl-[ACP] + CO2 + CoA</text>
        <dbReference type="Rhea" id="RHEA:12080"/>
        <dbReference type="Rhea" id="RHEA-COMP:9623"/>
        <dbReference type="Rhea" id="RHEA-COMP:9625"/>
        <dbReference type="ChEBI" id="CHEBI:15378"/>
        <dbReference type="ChEBI" id="CHEBI:16526"/>
        <dbReference type="ChEBI" id="CHEBI:57287"/>
        <dbReference type="ChEBI" id="CHEBI:57288"/>
        <dbReference type="ChEBI" id="CHEBI:78449"/>
        <dbReference type="ChEBI" id="CHEBI:78450"/>
        <dbReference type="EC" id="2.3.1.180"/>
    </reaction>
</comment>
<comment type="pathway">
    <text evidence="1">Lipid metabolism; fatty acid biosynthesis.</text>
</comment>
<comment type="subunit">
    <text evidence="1">Homodimer.</text>
</comment>
<comment type="subcellular location">
    <subcellularLocation>
        <location evidence="1">Cytoplasm</location>
    </subcellularLocation>
</comment>
<comment type="domain">
    <text evidence="1">The last Arg residue of the ACP-binding site is essential for the weak association between ACP/AcpP and FabH.</text>
</comment>
<comment type="similarity">
    <text evidence="1">Belongs to the thiolase-like superfamily. FabH family.</text>
</comment>